<organismHost>
    <name type="scientific">Homo sapiens</name>
    <name type="common">Human</name>
    <dbReference type="NCBI Taxonomy" id="9606"/>
</organismHost>
<gene>
    <name type="primary">F</name>
</gene>
<feature type="signal peptide" evidence="3">
    <location>
        <begin position="1"/>
        <end position="26"/>
    </location>
</feature>
<feature type="chain" id="PRO_0000039264" description="Fusion glycoprotein F0">
    <location>
        <begin position="27"/>
        <end position="529"/>
    </location>
</feature>
<feature type="chain" id="PRO_0000039265" description="Fusion glycoprotein F2">
    <location>
        <begin position="27"/>
        <end position="115"/>
    </location>
</feature>
<feature type="chain" id="PRO_0000039266" description="Fusion glycoprotein F1">
    <location>
        <begin position="116"/>
        <end position="529"/>
    </location>
</feature>
<feature type="topological domain" description="Extracellular" evidence="1">
    <location>
        <begin position="27"/>
        <end position="490"/>
    </location>
</feature>
<feature type="transmembrane region" description="Helical" evidence="1">
    <location>
        <begin position="491"/>
        <end position="521"/>
    </location>
</feature>
<feature type="topological domain" description="Cytoplasmic" evidence="1">
    <location>
        <begin position="522"/>
        <end position="529"/>
    </location>
</feature>
<feature type="region of interest" description="HRC" evidence="2">
    <location>
        <begin position="72"/>
        <end position="98"/>
    </location>
</feature>
<feature type="region of interest" description="Fusion peptide" evidence="2">
    <location>
        <begin position="116"/>
        <end position="141"/>
    </location>
</feature>
<feature type="region of interest" description="HRA" evidence="2">
    <location>
        <begin position="142"/>
        <end position="218"/>
    </location>
</feature>
<feature type="region of interest" description="Interaction with hemagglutinin" evidence="2">
    <location>
        <begin position="370"/>
        <end position="447"/>
    </location>
</feature>
<feature type="region of interest" description="HRB" evidence="2">
    <location>
        <begin position="448"/>
        <end position="497"/>
    </location>
</feature>
<feature type="coiled-coil region" evidence="3">
    <location>
        <begin position="141"/>
        <end position="169"/>
    </location>
</feature>
<feature type="coiled-coil region" evidence="3">
    <location>
        <begin position="465"/>
        <end position="490"/>
    </location>
</feature>
<feature type="site" description="Cleavage; by host" evidence="1">
    <location>
        <begin position="115"/>
        <end position="116"/>
    </location>
</feature>
<feature type="glycosylation site" description="N-linked (GlcNAc...) asparagine; by host" evidence="3">
    <location>
        <position position="32"/>
    </location>
</feature>
<feature type="glycosylation site" description="N-linked (GlcNAc...) asparagine; by host" evidence="3">
    <location>
        <position position="64"/>
    </location>
</feature>
<feature type="glycosylation site" description="N-linked (GlcNAc...) asparagine; by host" evidence="3">
    <location>
        <position position="70"/>
    </location>
</feature>
<feature type="disulfide bond" description="Interchain (with C-195)" evidence="2">
    <location>
        <position position="71"/>
    </location>
</feature>
<feature type="disulfide bond" description="Interchain (with C-68)" evidence="2">
    <location>
        <position position="198"/>
    </location>
</feature>
<feature type="disulfide bond" evidence="2">
    <location>
        <begin position="337"/>
        <end position="346"/>
    </location>
</feature>
<feature type="disulfide bond" evidence="2">
    <location>
        <begin position="361"/>
        <end position="369"/>
    </location>
</feature>
<feature type="disulfide bond" evidence="2">
    <location>
        <begin position="393"/>
        <end position="398"/>
    </location>
</feature>
<feature type="disulfide bond" evidence="2">
    <location>
        <begin position="400"/>
        <end position="423"/>
    </location>
</feature>
<protein>
    <recommendedName>
        <fullName>Fusion glycoprotein F0</fullName>
    </recommendedName>
    <component>
        <recommendedName>
            <fullName>Fusion glycoprotein F2</fullName>
        </recommendedName>
    </component>
    <component>
        <recommendedName>
            <fullName>Fusion glycoprotein F1</fullName>
        </recommendedName>
    </component>
</protein>
<proteinExistence type="inferred from homology"/>
<organism>
    <name type="scientific">Measles virus (strain IP-3-Ca)</name>
    <name type="common">MeV</name>
    <name type="synonym">Subacute sclerose panencephalitis virus</name>
    <dbReference type="NCBI Taxonomy" id="11237"/>
    <lineage>
        <taxon>Viruses</taxon>
        <taxon>Riboviria</taxon>
        <taxon>Orthornavirae</taxon>
        <taxon>Negarnaviricota</taxon>
        <taxon>Haploviricotina</taxon>
        <taxon>Monjiviricetes</taxon>
        <taxon>Mononegavirales</taxon>
        <taxon>Paramyxoviridae</taxon>
        <taxon>Orthoparamyxovirinae</taxon>
        <taxon>Morbillivirus</taxon>
        <taxon>Morbillivirus hominis</taxon>
        <taxon>Measles morbillivirus</taxon>
    </lineage>
</organism>
<accession>P26031</accession>
<accession>Q83298</accession>
<sequence>MSIMGLKVNVSAIFMAVLLTLQTPTGQIHWGNLSKIGVVGIGSASYKVMTRSSHQSLVIKLMPNITLLNNCTRVEIAEYRRLLRTVLEPIRDALNAMTQNIRLVQSVASSRRHKRFAGVVLAGAALGVATAAQITAGIALHQSMLSSQAIDNLRASLETTNQAIEAIRQAGQEMILAVQGVQDYINNELIPSMNQLSCDLIGQKLGLKLLRYYTEILSLFGPSLRDPISAEISIQALSYALGGDINKVLEKLGYSGGDLLGILESRGIKARITHVDTESYFIVLSIAYPTLSEIKEVIVHRLEGVSYNIGSQEWYTTVPKYVATQGYLISNFDESSCTFMPEGTVCSQNALYPMSPLLQECLRGSTKSCARTLVSGSFGNRFILSQGNLIANCASILCKCYTTGTIIRQDPDKILTYIAADHCPVVEVNGVTIQVGSRRYPDAVDLHRIDLGPPISLERLDVGTNLGSAIAKLEDAKELLESSDQILRSMKGLSSTSIVYILIAVCLGGLIGIPALICCCRGRCNKKGE</sequence>
<evidence type="ECO:0000250" key="1"/>
<evidence type="ECO:0000250" key="2">
    <source>
        <dbReference type="UniProtKB" id="Q786F3"/>
    </source>
</evidence>
<evidence type="ECO:0000255" key="3"/>
<evidence type="ECO:0000305" key="4"/>
<comment type="function">
    <text evidence="1 2">Class I viral fusion protein. Under the current model, the protein has at least 3 conformational states: pre-fusion native state, pre-hairpin intermediate state, and post-fusion hairpin state. During viral and plasma cell membrane fusion, the heptad repeat (HR) regions assume a trimer-of-hairpins structure, positioning the fusion peptide in close proximity to the C-terminal region of the ectodomain. The formation of this structure appears to drive apposition and subsequent fusion of viral and plasma cell membranes. Directs fusion of viral and cellular membranes leading to delivery of the nucleocapsid into the cytoplasm. This fusion is pH independent and occurs directly at the outer cell membrane. During viral entry or virus-mediated fusion between infected cells and neighboring susceptible cells, the head domain of the H protein initially binds to its receptor and then the stalk region of the H protein transmits the fusion-triggering signal to the F protein (By similarity). Upon HN binding to its cellular receptor, the hydrophobic fusion peptide is unmasked and interacts with the cellular membrane, inducing the fusion between cell and virion membranes. Later in infection, F proteins expressed at the plasma membrane of infected cells could mediate fusion with adjacent cells to form syncytia, a cytopathic effect that could lead to tissue necrosis (By similarity).</text>
</comment>
<comment type="function">
    <text evidence="2">Some hyperfusogenic isolates can induce membrane fusion in SLAM- and nectin-4-negative cells and are linked to fatal subacute sclerosing panencephalitis (SSPE) or measles inclusion body encephalitis (MIBE). The neuropathogenicity is closely associated with enhanced propagation mediated by cell-to-cell fusion in the brain, which is principally regulated by hyperfusogenic mutations of the viral F protein. Cell-to-cell transmission of the virus also occurs with hyperfusogenic isolates.</text>
</comment>
<comment type="subunit">
    <text evidence="2">Homotrimer of disulfide-linked F1-F2.</text>
</comment>
<comment type="subcellular location">
    <subcellularLocation>
        <location evidence="1">Virion membrane</location>
        <topology evidence="1">Single-pass type I membrane protein</topology>
    </subcellularLocation>
    <subcellularLocation>
        <location evidence="1">Host cell membrane</location>
        <topology evidence="1">Single-pass membrane protein</topology>
    </subcellularLocation>
</comment>
<comment type="domain">
    <text evidence="2">Contains 3 heptad repreat regions, HRA, HRB and HRC.</text>
</comment>
<comment type="PTM">
    <text evidence="2">The inactive precursor F0 is glycosylated and proteolytically cleaved into F1 and F2 to be functionally active. The cleavage is mediated by host furin during the transport and maturation of the polypeptide.</text>
</comment>
<comment type="similarity">
    <text evidence="4">Belongs to the paramyxoviruses fusion glycoprotein family.</text>
</comment>
<comment type="sequence caution" evidence="4">
    <conflict type="erroneous initiation">
        <sequence resource="EMBL-CDS" id="CAA34568"/>
    </conflict>
</comment>
<dbReference type="EMBL" id="X16566">
    <property type="protein sequence ID" value="CAA34567.1"/>
    <property type="molecule type" value="Genomic_RNA"/>
</dbReference>
<dbReference type="EMBL" id="X16566">
    <property type="protein sequence ID" value="CAA34568.1"/>
    <property type="status" value="ALT_INIT"/>
    <property type="molecule type" value="Genomic_RNA"/>
</dbReference>
<dbReference type="SMR" id="P26031"/>
<dbReference type="GlyCosmos" id="P26031">
    <property type="glycosylation" value="3 sites, No reported glycans"/>
</dbReference>
<dbReference type="GO" id="GO:0020002">
    <property type="term" value="C:host cell plasma membrane"/>
    <property type="evidence" value="ECO:0007669"/>
    <property type="project" value="UniProtKB-SubCell"/>
</dbReference>
<dbReference type="GO" id="GO:0016020">
    <property type="term" value="C:membrane"/>
    <property type="evidence" value="ECO:0007669"/>
    <property type="project" value="UniProtKB-KW"/>
</dbReference>
<dbReference type="GO" id="GO:0019031">
    <property type="term" value="C:viral envelope"/>
    <property type="evidence" value="ECO:0007669"/>
    <property type="project" value="UniProtKB-KW"/>
</dbReference>
<dbReference type="GO" id="GO:0055036">
    <property type="term" value="C:virion membrane"/>
    <property type="evidence" value="ECO:0007669"/>
    <property type="project" value="UniProtKB-SubCell"/>
</dbReference>
<dbReference type="GO" id="GO:0019064">
    <property type="term" value="P:fusion of virus membrane with host plasma membrane"/>
    <property type="evidence" value="ECO:0007669"/>
    <property type="project" value="UniProtKB-KW"/>
</dbReference>
<dbReference type="GO" id="GO:0046718">
    <property type="term" value="P:symbiont entry into host cell"/>
    <property type="evidence" value="ECO:0007669"/>
    <property type="project" value="UniProtKB-KW"/>
</dbReference>
<dbReference type="Gene3D" id="1.10.287.2480">
    <property type="match status" value="1"/>
</dbReference>
<dbReference type="Gene3D" id="6.10.10.110">
    <property type="match status" value="1"/>
</dbReference>
<dbReference type="Gene3D" id="2.60.40.1690">
    <property type="entry name" value="Head and neck region of the ectodomain of NDV fusion glycoprotein"/>
    <property type="match status" value="1"/>
</dbReference>
<dbReference type="Gene3D" id="2.40.490.10">
    <property type="entry name" value="Newcastle disease virus like domain"/>
    <property type="match status" value="1"/>
</dbReference>
<dbReference type="InterPro" id="IPR000776">
    <property type="entry name" value="Fusion_F0_Paramyxovir"/>
</dbReference>
<dbReference type="Pfam" id="PF00523">
    <property type="entry name" value="Fusion_gly"/>
    <property type="match status" value="1"/>
</dbReference>
<dbReference type="SUPFAM" id="SSF69922">
    <property type="entry name" value="Head and neck region of the ectodomain of NDV fusion glycoprotein"/>
    <property type="match status" value="1"/>
</dbReference>
<dbReference type="SUPFAM" id="SSF58069">
    <property type="entry name" value="Virus ectodomain"/>
    <property type="match status" value="1"/>
</dbReference>
<name>FUS_MEASI</name>
<reference key="1">
    <citation type="journal article" date="1992" name="Virology">
        <title>Subacute sclerosing panencephalitis is typically characterized by alterations in the fusion protein cytoplasmic domain of the persisting measles virus.</title>
        <authorList>
            <person name="Schmid A."/>
            <person name="Spielhofer P."/>
            <person name="Cattaneo R."/>
            <person name="Baczko K."/>
            <person name="Ter Meulen V."/>
            <person name="Billeter M.A."/>
        </authorList>
    </citation>
    <scope>NUCLEOTIDE SEQUENCE [GENOMIC RNA]</scope>
</reference>
<keyword id="KW-0165">Cleavage on pair of basic residues</keyword>
<keyword id="KW-0175">Coiled coil</keyword>
<keyword id="KW-1015">Disulfide bond</keyword>
<keyword id="KW-1169">Fusion of virus membrane with host cell membrane</keyword>
<keyword id="KW-1168">Fusion of virus membrane with host membrane</keyword>
<keyword id="KW-0325">Glycoprotein</keyword>
<keyword id="KW-1032">Host cell membrane</keyword>
<keyword id="KW-1043">Host membrane</keyword>
<keyword id="KW-0472">Membrane</keyword>
<keyword id="KW-0732">Signal</keyword>
<keyword id="KW-0812">Transmembrane</keyword>
<keyword id="KW-1133">Transmembrane helix</keyword>
<keyword id="KW-0261">Viral envelope protein</keyword>
<keyword id="KW-1162">Viral penetration into host cytoplasm</keyword>
<keyword id="KW-0946">Virion</keyword>
<keyword id="KW-1160">Virus entry into host cell</keyword>